<reference key="1">
    <citation type="journal article" date="2007" name="PLoS Genet.">
        <title>The complete genome sequence of Yersinia pseudotuberculosis IP31758, the causative agent of Far East scarlet-like fever.</title>
        <authorList>
            <person name="Eppinger M."/>
            <person name="Rosovitz M.J."/>
            <person name="Fricke W.F."/>
            <person name="Rasko D.A."/>
            <person name="Kokorina G."/>
            <person name="Fayolle C."/>
            <person name="Lindler L.E."/>
            <person name="Carniel E."/>
            <person name="Ravel J."/>
        </authorList>
    </citation>
    <scope>NUCLEOTIDE SEQUENCE [LARGE SCALE GENOMIC DNA]</scope>
    <source>
        <strain>IP 31758</strain>
    </source>
</reference>
<gene>
    <name type="ordered locus">YpsIP31758_2006</name>
</gene>
<name>Y2006_YERP3</name>
<sequence length="148" mass="17175">MSQPPFWQQKTLAEMSDSEWESLCDGCGQCCLNKLIDEDTDEIYFTNVACDQLNIKTCQCSNYERRFELEEDCIKLTRENLVTFAWLPPTCAYRLIGEGHDLPRWHPLLTGSKAAMHGERISVRHIAVRESEVVDWQDHILNKPSWAK</sequence>
<comment type="similarity">
    <text evidence="1">Belongs to the UPF0260 family.</text>
</comment>
<accession>A7FIA1</accession>
<protein>
    <recommendedName>
        <fullName evidence="1">UPF0260 protein YpsIP31758_2006</fullName>
    </recommendedName>
</protein>
<proteinExistence type="inferred from homology"/>
<evidence type="ECO:0000255" key="1">
    <source>
        <dbReference type="HAMAP-Rule" id="MF_00676"/>
    </source>
</evidence>
<dbReference type="EMBL" id="CP000720">
    <property type="protein sequence ID" value="ABS46998.1"/>
    <property type="molecule type" value="Genomic_DNA"/>
</dbReference>
<dbReference type="RefSeq" id="WP_002211739.1">
    <property type="nucleotide sequence ID" value="NC_009708.1"/>
</dbReference>
<dbReference type="KEGG" id="ypi:YpsIP31758_2006"/>
<dbReference type="HOGENOM" id="CLU_109769_2_0_6"/>
<dbReference type="Proteomes" id="UP000002412">
    <property type="component" value="Chromosome"/>
</dbReference>
<dbReference type="HAMAP" id="MF_00676">
    <property type="entry name" value="UPF0260"/>
    <property type="match status" value="1"/>
</dbReference>
<dbReference type="InterPro" id="IPR005358">
    <property type="entry name" value="Puta_zinc/iron-chelating_dom"/>
</dbReference>
<dbReference type="InterPro" id="IPR008228">
    <property type="entry name" value="UCP006173"/>
</dbReference>
<dbReference type="NCBIfam" id="NF003498">
    <property type="entry name" value="PRK05170.1-1"/>
    <property type="match status" value="1"/>
</dbReference>
<dbReference type="NCBIfam" id="NF003501">
    <property type="entry name" value="PRK05170.1-5"/>
    <property type="match status" value="1"/>
</dbReference>
<dbReference type="NCBIfam" id="NF003507">
    <property type="entry name" value="PRK05170.2-5"/>
    <property type="match status" value="1"/>
</dbReference>
<dbReference type="PANTHER" id="PTHR37421">
    <property type="entry name" value="UPF0260 PROTEIN YCGN"/>
    <property type="match status" value="1"/>
</dbReference>
<dbReference type="PANTHER" id="PTHR37421:SF1">
    <property type="entry name" value="UPF0260 PROTEIN YCGN"/>
    <property type="match status" value="1"/>
</dbReference>
<dbReference type="Pfam" id="PF03692">
    <property type="entry name" value="CxxCxxCC"/>
    <property type="match status" value="1"/>
</dbReference>
<dbReference type="PIRSF" id="PIRSF006173">
    <property type="entry name" value="UCP006173"/>
    <property type="match status" value="1"/>
</dbReference>
<organism>
    <name type="scientific">Yersinia pseudotuberculosis serotype O:1b (strain IP 31758)</name>
    <dbReference type="NCBI Taxonomy" id="349747"/>
    <lineage>
        <taxon>Bacteria</taxon>
        <taxon>Pseudomonadati</taxon>
        <taxon>Pseudomonadota</taxon>
        <taxon>Gammaproteobacteria</taxon>
        <taxon>Enterobacterales</taxon>
        <taxon>Yersiniaceae</taxon>
        <taxon>Yersinia</taxon>
    </lineage>
</organism>
<feature type="chain" id="PRO_1000061963" description="UPF0260 protein YpsIP31758_2006">
    <location>
        <begin position="1"/>
        <end position="148"/>
    </location>
</feature>